<organism>
    <name type="scientific">Streptomyces fradiae</name>
    <name type="common">Streptomyces roseoflavus</name>
    <dbReference type="NCBI Taxonomy" id="1906"/>
    <lineage>
        <taxon>Bacteria</taxon>
        <taxon>Bacillati</taxon>
        <taxon>Actinomycetota</taxon>
        <taxon>Actinomycetes</taxon>
        <taxon>Kitasatosporales</taxon>
        <taxon>Streptomycetaceae</taxon>
        <taxon>Streptomyces</taxon>
    </lineage>
</organism>
<name>YT32_STRFR</name>
<proteinExistence type="predicted"/>
<protein>
    <recommendedName>
        <fullName>Uncharacterized 32.6 kDa protein in transposon Tn4556</fullName>
    </recommendedName>
</protein>
<sequence>MARVTCDPVVQRRVASTASLRAWAVESAQGVEGSCYANLPAGVRTSEMNCHHLLNHLHEKGHLGVAAALQVLRGADEDRHVFDAGRLAPGQHALHVFGTVSMADAWVGHAHLAGPSAVSVHDQADVLGQRPRCRLPPQPTGVQGVEEVGGAHRETFRMVSRADRSSWCTAEVGSSRSPAASVVLPGGTRPGTCAVGVRRFTATEYYVSRTTCCVASWERIPKVDHTWRSHAHQRRPDARAVRTGRRAAARVRHQRCHRAGLRSPPRTREPLWSLGPSGGEAAGEAPGGKGPPTPVLPHARRAGAA</sequence>
<dbReference type="EMBL" id="M29297">
    <property type="protein sequence ID" value="AAA88566.1"/>
    <property type="molecule type" value="Genomic_DNA"/>
</dbReference>
<dbReference type="PIR" id="JQ0428">
    <property type="entry name" value="JQ0428"/>
</dbReference>
<reference key="1">
    <citation type="journal article" date="1990" name="Gene">
        <title>Nucleotide sequence of Streptomyces fradiae transposable element Tn4556: a class-II transposon related to Tn3.</title>
        <authorList>
            <person name="Siemieniak D.R."/>
            <person name="Slightom J.L."/>
            <person name="Chung S.T."/>
        </authorList>
    </citation>
    <scope>NUCLEOTIDE SEQUENCE [GENOMIC DNA]</scope>
    <source>
        <transposon>Tn4556</transposon>
    </source>
</reference>
<accession>P20185</accession>
<evidence type="ECO:0000256" key="1">
    <source>
        <dbReference type="SAM" id="MobiDB-lite"/>
    </source>
</evidence>
<feature type="chain" id="PRO_0000066517" description="Uncharacterized 32.6 kDa protein in transposon Tn4556">
    <location>
        <begin position="1"/>
        <end position="305"/>
    </location>
</feature>
<feature type="region of interest" description="Disordered" evidence="1">
    <location>
        <begin position="255"/>
        <end position="305"/>
    </location>
</feature>
<feature type="compositionally biased region" description="Gly residues" evidence="1">
    <location>
        <begin position="276"/>
        <end position="288"/>
    </location>
</feature>
<keyword id="KW-0814">Transposable element</keyword>